<feature type="propeptide" id="PRO_0000031391" evidence="1">
    <location>
        <begin position="1"/>
        <end position="2"/>
    </location>
</feature>
<feature type="chain" id="PRO_0000031392" description="Ribulose bisphosphate carboxylase large chain">
    <location>
        <begin position="3"/>
        <end position="58" status="greater than"/>
    </location>
</feature>
<feature type="modified residue" description="N-acetylproline" evidence="1">
    <location>
        <position position="3"/>
    </location>
</feature>
<feature type="modified residue" description="N6,N6,N6-trimethyllysine" evidence="1">
    <location>
        <position position="14"/>
    </location>
</feature>
<feature type="non-terminal residue">
    <location>
        <position position="58"/>
    </location>
</feature>
<sequence length="58" mass="6294">MSPQTETKASVGFKAGVKDYKLTYYTPEYETKDTDILAAFRVTPQPGVPPEEAGQAVA</sequence>
<evidence type="ECO:0000250" key="1"/>
<evidence type="ECO:0000305" key="2"/>
<keyword id="KW-0007">Acetylation</keyword>
<keyword id="KW-0113">Calvin cycle</keyword>
<keyword id="KW-0120">Carbon dioxide fixation</keyword>
<keyword id="KW-0150">Chloroplast</keyword>
<keyword id="KW-0456">Lyase</keyword>
<keyword id="KW-0488">Methylation</keyword>
<keyword id="KW-0503">Monooxygenase</keyword>
<keyword id="KW-0560">Oxidoreductase</keyword>
<keyword id="KW-0601">Photorespiration</keyword>
<keyword id="KW-0602">Photosynthesis</keyword>
<keyword id="KW-0934">Plastid</keyword>
<dbReference type="EC" id="4.1.1.39"/>
<dbReference type="EMBL" id="X69753">
    <property type="protein sequence ID" value="CAA49408.1"/>
    <property type="molecule type" value="Genomic_DNA"/>
</dbReference>
<dbReference type="PIR" id="S31538">
    <property type="entry name" value="S31538"/>
</dbReference>
<dbReference type="SMR" id="P31200"/>
<dbReference type="GO" id="GO:0009507">
    <property type="term" value="C:chloroplast"/>
    <property type="evidence" value="ECO:0007669"/>
    <property type="project" value="UniProtKB-SubCell"/>
</dbReference>
<dbReference type="GO" id="GO:0004497">
    <property type="term" value="F:monooxygenase activity"/>
    <property type="evidence" value="ECO:0007669"/>
    <property type="project" value="UniProtKB-KW"/>
</dbReference>
<dbReference type="GO" id="GO:0016984">
    <property type="term" value="F:ribulose-bisphosphate carboxylase activity"/>
    <property type="evidence" value="ECO:0007669"/>
    <property type="project" value="UniProtKB-EC"/>
</dbReference>
<dbReference type="GO" id="GO:0009853">
    <property type="term" value="P:photorespiration"/>
    <property type="evidence" value="ECO:0007669"/>
    <property type="project" value="UniProtKB-KW"/>
</dbReference>
<dbReference type="GO" id="GO:0019253">
    <property type="term" value="P:reductive pentose-phosphate cycle"/>
    <property type="evidence" value="ECO:0007669"/>
    <property type="project" value="UniProtKB-KW"/>
</dbReference>
<dbReference type="Gene3D" id="3.30.70.150">
    <property type="entry name" value="RuBisCO large subunit, N-terminal domain"/>
    <property type="match status" value="1"/>
</dbReference>
<dbReference type="InterPro" id="IPR033966">
    <property type="entry name" value="RuBisCO"/>
</dbReference>
<dbReference type="InterPro" id="IPR017443">
    <property type="entry name" value="RuBisCO_lsu_fd_N"/>
</dbReference>
<dbReference type="InterPro" id="IPR036422">
    <property type="entry name" value="RuBisCO_lsu_N_sf"/>
</dbReference>
<dbReference type="PANTHER" id="PTHR42704">
    <property type="entry name" value="RIBULOSE BISPHOSPHATE CARBOXYLASE"/>
    <property type="match status" value="1"/>
</dbReference>
<dbReference type="PANTHER" id="PTHR42704:SF15">
    <property type="entry name" value="RIBULOSE BISPHOSPHATE CARBOXYLASE LARGE CHAIN"/>
    <property type="match status" value="1"/>
</dbReference>
<dbReference type="Pfam" id="PF02788">
    <property type="entry name" value="RuBisCO_large_N"/>
    <property type="match status" value="1"/>
</dbReference>
<dbReference type="SUPFAM" id="SSF54966">
    <property type="entry name" value="RuBisCO, large subunit, small (N-terminal) domain"/>
    <property type="match status" value="1"/>
</dbReference>
<proteinExistence type="inferred from homology"/>
<organism>
    <name type="scientific">Rosa damascena</name>
    <name type="common">Damask rose</name>
    <name type="synonym">Rosa gallica x Rosa moschata</name>
    <dbReference type="NCBI Taxonomy" id="3765"/>
    <lineage>
        <taxon>Eukaryota</taxon>
        <taxon>Viridiplantae</taxon>
        <taxon>Streptophyta</taxon>
        <taxon>Embryophyta</taxon>
        <taxon>Tracheophyta</taxon>
        <taxon>Spermatophyta</taxon>
        <taxon>Magnoliopsida</taxon>
        <taxon>eudicotyledons</taxon>
        <taxon>Gunneridae</taxon>
        <taxon>Pentapetalae</taxon>
        <taxon>rosids</taxon>
        <taxon>fabids</taxon>
        <taxon>Rosales</taxon>
        <taxon>Rosaceae</taxon>
        <taxon>Rosoideae</taxon>
        <taxon>Rosoideae incertae sedis</taxon>
        <taxon>Rosa</taxon>
    </lineage>
</organism>
<geneLocation type="chloroplast"/>
<protein>
    <recommendedName>
        <fullName>Ribulose bisphosphate carboxylase large chain</fullName>
        <shortName>RuBisCO large subunit</shortName>
        <ecNumber>4.1.1.39</ecNumber>
    </recommendedName>
</protein>
<gene>
    <name type="primary">rbcL</name>
</gene>
<comment type="function">
    <text evidence="1">RuBisCO catalyzes two reactions: the carboxylation of D-ribulose 1,5-bisphosphate, the primary event in carbon dioxide fixation, as well as the oxidative fragmentation of the pentose substrate in the photorespiration process. Both reactions occur simultaneously and in competition at the same active site (By similarity).</text>
</comment>
<comment type="catalytic activity">
    <reaction>
        <text>2 (2R)-3-phosphoglycerate + 2 H(+) = D-ribulose 1,5-bisphosphate + CO2 + H2O</text>
        <dbReference type="Rhea" id="RHEA:23124"/>
        <dbReference type="ChEBI" id="CHEBI:15377"/>
        <dbReference type="ChEBI" id="CHEBI:15378"/>
        <dbReference type="ChEBI" id="CHEBI:16526"/>
        <dbReference type="ChEBI" id="CHEBI:57870"/>
        <dbReference type="ChEBI" id="CHEBI:58272"/>
        <dbReference type="EC" id="4.1.1.39"/>
    </reaction>
</comment>
<comment type="catalytic activity">
    <reaction>
        <text>D-ribulose 1,5-bisphosphate + O2 = 2-phosphoglycolate + (2R)-3-phosphoglycerate + 2 H(+)</text>
        <dbReference type="Rhea" id="RHEA:36631"/>
        <dbReference type="ChEBI" id="CHEBI:15378"/>
        <dbReference type="ChEBI" id="CHEBI:15379"/>
        <dbReference type="ChEBI" id="CHEBI:57870"/>
        <dbReference type="ChEBI" id="CHEBI:58033"/>
        <dbReference type="ChEBI" id="CHEBI:58272"/>
    </reaction>
</comment>
<comment type="subunit">
    <text evidence="1">Heterohexadecamer of 8 large chains and 8 small chains.</text>
</comment>
<comment type="subcellular location">
    <subcellularLocation>
        <location>Plastid</location>
        <location>Chloroplast</location>
    </subcellularLocation>
</comment>
<comment type="miscellaneous">
    <text evidence="1">The basic functional RuBisCO is composed of a large chain homodimer in a 'head-to-tail' conformation. In form I RuBisCO this homodimer is arranged in a barrel-like tetramer with the small subunits forming a tetrameric 'cap' on each end of the 'barrel' (By similarity).</text>
</comment>
<comment type="similarity">
    <text evidence="2">Belongs to the RuBisCO large chain family. Type I subfamily.</text>
</comment>
<name>RBL_ROSDA</name>
<reference key="1">
    <citation type="journal article" date="1994" name="Mol. Phylogenet. Evol.">
        <title>Molecular phylogeny of families related to Celastrales based on rbcL 5' flanking sequences.</title>
        <authorList>
            <person name="Savolainen V."/>
            <person name="Manen J.F."/>
            <person name="Douzery E.J.P."/>
            <person name="Spichiger R."/>
        </authorList>
    </citation>
    <scope>NUCLEOTIDE SEQUENCE [GENOMIC DNA]</scope>
    <source>
        <strain>Sample RDA5</strain>
    </source>
</reference>
<accession>P31200</accession>